<reference key="1">
    <citation type="submission" date="2005-08" db="EMBL/GenBank/DDBJ databases">
        <title>Complete sequence of Pelodictyon luteolum DSM 273.</title>
        <authorList>
            <consortium name="US DOE Joint Genome Institute"/>
            <person name="Copeland A."/>
            <person name="Lucas S."/>
            <person name="Lapidus A."/>
            <person name="Barry K."/>
            <person name="Detter J.C."/>
            <person name="Glavina T."/>
            <person name="Hammon N."/>
            <person name="Israni S."/>
            <person name="Pitluck S."/>
            <person name="Bryant D."/>
            <person name="Schmutz J."/>
            <person name="Larimer F."/>
            <person name="Land M."/>
            <person name="Kyrpides N."/>
            <person name="Ivanova N."/>
            <person name="Richardson P."/>
        </authorList>
    </citation>
    <scope>NUCLEOTIDE SEQUENCE [LARGE SCALE GENOMIC DNA]</scope>
    <source>
        <strain>DSM 273 / BCRC 81028 / 2530</strain>
    </source>
</reference>
<proteinExistence type="inferred from homology"/>
<dbReference type="EMBL" id="CP000096">
    <property type="protein sequence ID" value="ABB24612.1"/>
    <property type="molecule type" value="Genomic_DNA"/>
</dbReference>
<dbReference type="RefSeq" id="WP_011358484.1">
    <property type="nucleotide sequence ID" value="NC_007512.1"/>
</dbReference>
<dbReference type="SMR" id="Q3B219"/>
<dbReference type="STRING" id="319225.Plut_1758"/>
<dbReference type="KEGG" id="plt:Plut_1758"/>
<dbReference type="eggNOG" id="COG0632">
    <property type="taxonomic scope" value="Bacteria"/>
</dbReference>
<dbReference type="HOGENOM" id="CLU_087936_3_0_10"/>
<dbReference type="OrthoDB" id="5293449at2"/>
<dbReference type="Proteomes" id="UP000002709">
    <property type="component" value="Chromosome"/>
</dbReference>
<dbReference type="GO" id="GO:0005737">
    <property type="term" value="C:cytoplasm"/>
    <property type="evidence" value="ECO:0007669"/>
    <property type="project" value="UniProtKB-SubCell"/>
</dbReference>
<dbReference type="GO" id="GO:0009379">
    <property type="term" value="C:Holliday junction helicase complex"/>
    <property type="evidence" value="ECO:0007669"/>
    <property type="project" value="InterPro"/>
</dbReference>
<dbReference type="GO" id="GO:0048476">
    <property type="term" value="C:Holliday junction resolvase complex"/>
    <property type="evidence" value="ECO:0007669"/>
    <property type="project" value="UniProtKB-UniRule"/>
</dbReference>
<dbReference type="GO" id="GO:0005524">
    <property type="term" value="F:ATP binding"/>
    <property type="evidence" value="ECO:0007669"/>
    <property type="project" value="InterPro"/>
</dbReference>
<dbReference type="GO" id="GO:0000400">
    <property type="term" value="F:four-way junction DNA binding"/>
    <property type="evidence" value="ECO:0007669"/>
    <property type="project" value="UniProtKB-UniRule"/>
</dbReference>
<dbReference type="GO" id="GO:0009378">
    <property type="term" value="F:four-way junction helicase activity"/>
    <property type="evidence" value="ECO:0007669"/>
    <property type="project" value="InterPro"/>
</dbReference>
<dbReference type="GO" id="GO:0006310">
    <property type="term" value="P:DNA recombination"/>
    <property type="evidence" value="ECO:0007669"/>
    <property type="project" value="UniProtKB-UniRule"/>
</dbReference>
<dbReference type="GO" id="GO:0006281">
    <property type="term" value="P:DNA repair"/>
    <property type="evidence" value="ECO:0007669"/>
    <property type="project" value="UniProtKB-UniRule"/>
</dbReference>
<dbReference type="CDD" id="cd14332">
    <property type="entry name" value="UBA_RuvA_C"/>
    <property type="match status" value="1"/>
</dbReference>
<dbReference type="Gene3D" id="1.10.150.20">
    <property type="entry name" value="5' to 3' exonuclease, C-terminal subdomain"/>
    <property type="match status" value="1"/>
</dbReference>
<dbReference type="Gene3D" id="1.10.8.10">
    <property type="entry name" value="DNA helicase RuvA subunit, C-terminal domain"/>
    <property type="match status" value="1"/>
</dbReference>
<dbReference type="Gene3D" id="2.40.50.140">
    <property type="entry name" value="Nucleic acid-binding proteins"/>
    <property type="match status" value="1"/>
</dbReference>
<dbReference type="HAMAP" id="MF_00031">
    <property type="entry name" value="DNA_HJ_migration_RuvA"/>
    <property type="match status" value="1"/>
</dbReference>
<dbReference type="InterPro" id="IPR013849">
    <property type="entry name" value="DNA_helicase_Holl-junc_RuvA_I"/>
</dbReference>
<dbReference type="InterPro" id="IPR003583">
    <property type="entry name" value="Hlx-hairpin-Hlx_DNA-bd_motif"/>
</dbReference>
<dbReference type="InterPro" id="IPR012340">
    <property type="entry name" value="NA-bd_OB-fold"/>
</dbReference>
<dbReference type="InterPro" id="IPR000085">
    <property type="entry name" value="RuvA"/>
</dbReference>
<dbReference type="InterPro" id="IPR010994">
    <property type="entry name" value="RuvA_2-like"/>
</dbReference>
<dbReference type="InterPro" id="IPR011114">
    <property type="entry name" value="RuvA_C"/>
</dbReference>
<dbReference type="InterPro" id="IPR036267">
    <property type="entry name" value="RuvA_C_sf"/>
</dbReference>
<dbReference type="NCBIfam" id="TIGR00084">
    <property type="entry name" value="ruvA"/>
    <property type="match status" value="1"/>
</dbReference>
<dbReference type="Pfam" id="PF14520">
    <property type="entry name" value="HHH_5"/>
    <property type="match status" value="1"/>
</dbReference>
<dbReference type="Pfam" id="PF07499">
    <property type="entry name" value="RuvA_C"/>
    <property type="match status" value="1"/>
</dbReference>
<dbReference type="Pfam" id="PF01330">
    <property type="entry name" value="RuvA_N"/>
    <property type="match status" value="1"/>
</dbReference>
<dbReference type="SMART" id="SM00278">
    <property type="entry name" value="HhH1"/>
    <property type="match status" value="2"/>
</dbReference>
<dbReference type="SUPFAM" id="SSF46929">
    <property type="entry name" value="DNA helicase RuvA subunit, C-terminal domain"/>
    <property type="match status" value="1"/>
</dbReference>
<dbReference type="SUPFAM" id="SSF50249">
    <property type="entry name" value="Nucleic acid-binding proteins"/>
    <property type="match status" value="1"/>
</dbReference>
<dbReference type="SUPFAM" id="SSF47781">
    <property type="entry name" value="RuvA domain 2-like"/>
    <property type="match status" value="1"/>
</dbReference>
<protein>
    <recommendedName>
        <fullName evidence="1">Holliday junction branch migration complex subunit RuvA</fullName>
    </recommendedName>
</protein>
<accession>Q3B219</accession>
<keyword id="KW-0963">Cytoplasm</keyword>
<keyword id="KW-0227">DNA damage</keyword>
<keyword id="KW-0233">DNA recombination</keyword>
<keyword id="KW-0234">DNA repair</keyword>
<keyword id="KW-0238">DNA-binding</keyword>
<keyword id="KW-1185">Reference proteome</keyword>
<organism>
    <name type="scientific">Chlorobium luteolum (strain DSM 273 / BCRC 81028 / 2530)</name>
    <name type="common">Pelodictyon luteolum</name>
    <dbReference type="NCBI Taxonomy" id="319225"/>
    <lineage>
        <taxon>Bacteria</taxon>
        <taxon>Pseudomonadati</taxon>
        <taxon>Chlorobiota</taxon>
        <taxon>Chlorobiia</taxon>
        <taxon>Chlorobiales</taxon>
        <taxon>Chlorobiaceae</taxon>
        <taxon>Chlorobium/Pelodictyon group</taxon>
        <taxon>Pelodictyon</taxon>
    </lineage>
</organism>
<feature type="chain" id="PRO_1000002509" description="Holliday junction branch migration complex subunit RuvA">
    <location>
        <begin position="1"/>
        <end position="200"/>
    </location>
</feature>
<feature type="region of interest" description="Domain I" evidence="1">
    <location>
        <begin position="1"/>
        <end position="64"/>
    </location>
</feature>
<feature type="region of interest" description="Domain II" evidence="1">
    <location>
        <begin position="65"/>
        <end position="143"/>
    </location>
</feature>
<feature type="region of interest" description="Flexible linker" evidence="1">
    <location>
        <begin position="144"/>
        <end position="154"/>
    </location>
</feature>
<feature type="region of interest" description="Domain III" evidence="1">
    <location>
        <begin position="154"/>
        <end position="200"/>
    </location>
</feature>
<name>RUVA_CHLL3</name>
<evidence type="ECO:0000255" key="1">
    <source>
        <dbReference type="HAMAP-Rule" id="MF_00031"/>
    </source>
</evidence>
<comment type="function">
    <text evidence="1">The RuvA-RuvB-RuvC complex processes Holliday junction (HJ) DNA during genetic recombination and DNA repair, while the RuvA-RuvB complex plays an important role in the rescue of blocked DNA replication forks via replication fork reversal (RFR). RuvA specifically binds to HJ cruciform DNA, conferring on it an open structure. The RuvB hexamer acts as an ATP-dependent pump, pulling dsDNA into and through the RuvAB complex. HJ branch migration allows RuvC to scan DNA until it finds its consensus sequence, where it cleaves and resolves the cruciform DNA.</text>
</comment>
<comment type="subunit">
    <text evidence="1">Homotetramer. Forms an RuvA(8)-RuvB(12)-Holliday junction (HJ) complex. HJ DNA is sandwiched between 2 RuvA tetramers; dsDNA enters through RuvA and exits via RuvB. An RuvB hexamer assembles on each DNA strand where it exits the tetramer. Each RuvB hexamer is contacted by two RuvA subunits (via domain III) on 2 adjacent RuvB subunits; this complex drives branch migration. In the full resolvosome a probable DNA-RuvA(4)-RuvB(12)-RuvC(2) complex forms which resolves the HJ.</text>
</comment>
<comment type="subcellular location">
    <subcellularLocation>
        <location evidence="1">Cytoplasm</location>
    </subcellularLocation>
</comment>
<comment type="domain">
    <text evidence="1">Has three domains with a flexible linker between the domains II and III and assumes an 'L' shape. Domain III is highly mobile and contacts RuvB.</text>
</comment>
<comment type="similarity">
    <text evidence="1">Belongs to the RuvA family.</text>
</comment>
<gene>
    <name evidence="1" type="primary">ruvA</name>
    <name type="ordered locus">Plut_1758</name>
</gene>
<sequence length="200" mass="21148">MYAYFRGRVVSVLPEEAVLEVSGIAYRFLISTGTSRSLPQAGNEAILYTHLSVREDALQLYGFSSEEEKQLFRLLLLVSGVGPKLALAVLSGLPVAEVHEAILANAPERLFGVTGVGRKTAARIILELRDRILKLSPPGAAATPAGAVQCGIREDATNALLTLGFSRTAAQQAVAGVLEANPGGSVEDVVKSALLAMHNR</sequence>